<sequence length="468" mass="49758">MINRLKVTFSAAAFSLLAGTALAQTPDADSALVQKGAYVARLGDCVACHTALHGQSYAGGLEIKSPIGTIYSTNITPDPTYGIGRYTFAEFDEAVRHGIRKDGSTLYPAMPYPSFSRMTKEDMQALYAYFMHGVKPVAQPDKQPDISWPLSMRWPLGIWRMMFSPSPKDFTPAPGTDPEIARGDYLVTGPGHCGACHTPRGFAMQEKALDAAGGPDFLSGGAPIDNWVAPSLRNDPVVGLGRWSEDDIYTFLKSGRIDHSAVFGGMGDVVAWSTQYFTDDDLHAIAKYLKSLPPVPPSQGNYTYDPSTANMLASGNTASVPGADTYVKECAICHRNDGGGVARMFPPLAGNPVVVTENPTSLVNVIAHGGVLPPSNWAPSAVAMPGYSKSLSAQQIADVVNFIRTSWGNKAPGTVTAADVTKLRDTGAPVSSSGWNSVSSGWSVFLPQPYGSGWTFAPQTHTGQDAAQ</sequence>
<protein>
    <recommendedName>
        <fullName evidence="5">Alcohol dehydrogenase (quinone), cytochrome c subunit</fullName>
        <shortName evidence="5">ADH</shortName>
        <ecNumber evidence="1">1.1.5.5</ecNumber>
    </recommendedName>
    <alternativeName>
        <fullName evidence="1">Alcohol dehydrogenase (quinone), subunit II</fullName>
    </alternativeName>
    <alternativeName>
        <fullName evidence="1">Cytochrome c-553</fullName>
    </alternativeName>
    <alternativeName>
        <fullName evidence="1">Cytochrome c553</fullName>
    </alternativeName>
    <alternativeName>
        <fullName evidence="1">Ethanol:Q2 reductase</fullName>
    </alternativeName>
    <alternativeName>
        <fullName evidence="1">G3-ADH subunit II</fullName>
    </alternativeName>
    <alternativeName>
        <fullName evidence="1">Quinohemoprotein-cytochrome c complex</fullName>
    </alternativeName>
    <alternativeName>
        <fullName evidence="1">Ubiquinol oxidase</fullName>
    </alternativeName>
</protein>
<organism>
    <name type="scientific">Gluconacetobacter polyoxogenes</name>
    <name type="common">Acetobacter polyoxogenes</name>
    <dbReference type="NCBI Taxonomy" id="439"/>
    <lineage>
        <taxon>Bacteria</taxon>
        <taxon>Pseudomonadati</taxon>
        <taxon>Pseudomonadota</taxon>
        <taxon>Alphaproteobacteria</taxon>
        <taxon>Acetobacterales</taxon>
        <taxon>Acetobacteraceae</taxon>
        <taxon>Gluconacetobacter</taxon>
    </lineage>
</organism>
<feature type="signal peptide" evidence="2">
    <location>
        <begin position="1"/>
        <end position="23"/>
    </location>
</feature>
<feature type="chain" id="PRO_0000006596" description="Alcohol dehydrogenase (quinone), cytochrome c subunit">
    <location>
        <begin position="24"/>
        <end position="468"/>
    </location>
</feature>
<feature type="domain" description="Cytochrome c 1" evidence="3">
    <location>
        <begin position="31"/>
        <end position="134"/>
    </location>
</feature>
<feature type="domain" description="Cytochrome c 2" evidence="3">
    <location>
        <begin position="178"/>
        <end position="293"/>
    </location>
</feature>
<feature type="domain" description="Cytochrome c 3" evidence="3">
    <location>
        <begin position="317"/>
        <end position="407"/>
    </location>
</feature>
<feature type="binding site" description="covalent" evidence="3">
    <location>
        <position position="45"/>
    </location>
    <ligand>
        <name>heme c</name>
        <dbReference type="ChEBI" id="CHEBI:61717"/>
        <label>1</label>
    </ligand>
</feature>
<feature type="binding site" description="covalent" evidence="3">
    <location>
        <position position="48"/>
    </location>
    <ligand>
        <name>heme c</name>
        <dbReference type="ChEBI" id="CHEBI:61717"/>
        <label>1</label>
    </ligand>
</feature>
<feature type="binding site" description="axial binding residue" evidence="3">
    <location>
        <position position="49"/>
    </location>
    <ligand>
        <name>heme c</name>
        <dbReference type="ChEBI" id="CHEBI:61717"/>
        <label>1</label>
    </ligand>
    <ligandPart>
        <name>Fe</name>
        <dbReference type="ChEBI" id="CHEBI:18248"/>
    </ligandPart>
</feature>
<feature type="binding site" description="covalent" evidence="3">
    <location>
        <position position="193"/>
    </location>
    <ligand>
        <name>heme c</name>
        <dbReference type="ChEBI" id="CHEBI:61717"/>
        <label>2</label>
    </ligand>
</feature>
<feature type="binding site" description="covalent" evidence="3">
    <location>
        <position position="196"/>
    </location>
    <ligand>
        <name>heme c</name>
        <dbReference type="ChEBI" id="CHEBI:61717"/>
        <label>2</label>
    </ligand>
</feature>
<feature type="binding site" description="axial binding residue" evidence="3">
    <location>
        <position position="197"/>
    </location>
    <ligand>
        <name>heme c</name>
        <dbReference type="ChEBI" id="CHEBI:61717"/>
        <label>2</label>
    </ligand>
    <ligandPart>
        <name>Fe</name>
        <dbReference type="ChEBI" id="CHEBI:18248"/>
    </ligandPart>
</feature>
<feature type="binding site" description="covalent" evidence="3">
    <location>
        <position position="330"/>
    </location>
    <ligand>
        <name>heme c</name>
        <dbReference type="ChEBI" id="CHEBI:61717"/>
        <label>3</label>
    </ligand>
</feature>
<feature type="binding site" description="covalent" evidence="3">
    <location>
        <position position="333"/>
    </location>
    <ligand>
        <name>heme c</name>
        <dbReference type="ChEBI" id="CHEBI:61717"/>
        <label>3</label>
    </ligand>
</feature>
<feature type="binding site" description="axial binding residue" evidence="3">
    <location>
        <position position="334"/>
    </location>
    <ligand>
        <name>heme c</name>
        <dbReference type="ChEBI" id="CHEBI:61717"/>
        <label>3</label>
    </ligand>
    <ligandPart>
        <name>Fe</name>
        <dbReference type="ChEBI" id="CHEBI:18248"/>
    </ligandPart>
</feature>
<proteinExistence type="evidence at protein level"/>
<dbReference type="EC" id="1.1.5.5" evidence="1"/>
<dbReference type="EMBL" id="D00635">
    <property type="protein sequence ID" value="BAA00529.1"/>
    <property type="molecule type" value="Genomic_DNA"/>
</dbReference>
<dbReference type="PIR" id="S14271">
    <property type="entry name" value="S14271"/>
</dbReference>
<dbReference type="SMR" id="P0A388"/>
<dbReference type="GO" id="GO:0005886">
    <property type="term" value="C:plasma membrane"/>
    <property type="evidence" value="ECO:0007669"/>
    <property type="project" value="UniProtKB-SubCell"/>
</dbReference>
<dbReference type="GO" id="GO:0009055">
    <property type="term" value="F:electron transfer activity"/>
    <property type="evidence" value="ECO:0007669"/>
    <property type="project" value="InterPro"/>
</dbReference>
<dbReference type="GO" id="GO:0020037">
    <property type="term" value="F:heme binding"/>
    <property type="evidence" value="ECO:0007669"/>
    <property type="project" value="InterPro"/>
</dbReference>
<dbReference type="GO" id="GO:0005506">
    <property type="term" value="F:iron ion binding"/>
    <property type="evidence" value="ECO:0007669"/>
    <property type="project" value="InterPro"/>
</dbReference>
<dbReference type="GO" id="GO:0016614">
    <property type="term" value="F:oxidoreductase activity, acting on CH-OH group of donors"/>
    <property type="evidence" value="ECO:0007669"/>
    <property type="project" value="InterPro"/>
</dbReference>
<dbReference type="Gene3D" id="1.10.760.10">
    <property type="entry name" value="Cytochrome c-like domain"/>
    <property type="match status" value="3"/>
</dbReference>
<dbReference type="InterPro" id="IPR009056">
    <property type="entry name" value="Cyt_c-like_dom"/>
</dbReference>
<dbReference type="InterPro" id="IPR036909">
    <property type="entry name" value="Cyt_c-like_dom_sf"/>
</dbReference>
<dbReference type="InterPro" id="IPR051459">
    <property type="entry name" value="Cytochrome_c-type_DH"/>
</dbReference>
<dbReference type="InterPro" id="IPR014353">
    <property type="entry name" value="Membr-bd_ADH_cyt_c"/>
</dbReference>
<dbReference type="PANTHER" id="PTHR35008:SF8">
    <property type="entry name" value="ALCOHOL DEHYDROGENASE CYTOCHROME C SUBUNIT"/>
    <property type="match status" value="1"/>
</dbReference>
<dbReference type="PANTHER" id="PTHR35008">
    <property type="entry name" value="BLL4482 PROTEIN-RELATED"/>
    <property type="match status" value="1"/>
</dbReference>
<dbReference type="Pfam" id="PF00034">
    <property type="entry name" value="Cytochrom_C"/>
    <property type="match status" value="3"/>
</dbReference>
<dbReference type="PIRSF" id="PIRSF000018">
    <property type="entry name" value="Mb_ADH_cyt_c"/>
    <property type="match status" value="1"/>
</dbReference>
<dbReference type="SUPFAM" id="SSF46626">
    <property type="entry name" value="Cytochrome c"/>
    <property type="match status" value="3"/>
</dbReference>
<dbReference type="PROSITE" id="PS51007">
    <property type="entry name" value="CYTC"/>
    <property type="match status" value="3"/>
</dbReference>
<keyword id="KW-1003">Cell membrane</keyword>
<keyword id="KW-0903">Direct protein sequencing</keyword>
<keyword id="KW-0249">Electron transport</keyword>
<keyword id="KW-0349">Heme</keyword>
<keyword id="KW-0408">Iron</keyword>
<keyword id="KW-0472">Membrane</keyword>
<keyword id="KW-0479">Metal-binding</keyword>
<keyword id="KW-0560">Oxidoreductase</keyword>
<keyword id="KW-0677">Repeat</keyword>
<keyword id="KW-0679">Respiratory chain</keyword>
<keyword id="KW-0732">Signal</keyword>
<keyword id="KW-0813">Transport</keyword>
<accession>P0A388</accession>
<accession>Q03318</accession>
<comment type="function">
    <text evidence="1 4">Cytochrome c component of the alcohol dehydrogenase multicomponent enzyme system which is involved in the production of acetic acid and in the ethanol oxidase respiratory chain (By similarity). Quinohemoprotein alcohol dehydrogenase (ADH) catalyzes the oxidation of ethanol to acetaldehyde by transferring electrons to the ubiquinone embedded in the membrane phospholipids (PubMed:2001402). The electrons transfer from ethanol to membranous ubiquinone occurs from pyrroloquinoline quinone (PQQ) to one heme c in subunit I (AdhA), and finally to two heme c in subunit II (AdhB) (By similarity). Besides ubiquinone reduction, ADH also has a ubiquinol (QH2) oxidation reaction which mediates electron transfer from ubiquinol to the non-energy generating bypass oxidase system (By similarity). The electrons transfer occurs from ubiquinol (QH2) to the additional heme c within subunit II (AdhB) (By similarity).</text>
</comment>
<comment type="catalytic activity">
    <reaction evidence="1">
        <text>ethanol + a ubiquinone = a ubiquinol + acetaldehyde</text>
        <dbReference type="Rhea" id="RHEA:26442"/>
        <dbReference type="Rhea" id="RHEA-COMP:9565"/>
        <dbReference type="Rhea" id="RHEA-COMP:9566"/>
        <dbReference type="ChEBI" id="CHEBI:15343"/>
        <dbReference type="ChEBI" id="CHEBI:16236"/>
        <dbReference type="ChEBI" id="CHEBI:16389"/>
        <dbReference type="ChEBI" id="CHEBI:17976"/>
        <dbReference type="EC" id="1.1.5.5"/>
    </reaction>
</comment>
<comment type="cofactor">
    <cofactor evidence="1">
        <name>heme c</name>
        <dbReference type="ChEBI" id="CHEBI:61717"/>
    </cofactor>
    <text evidence="1">Binds 3 heme c groups covalently per subunit.</text>
</comment>
<comment type="subunit">
    <text evidence="7">The alcohol dehydrogenase multicomponent enzyme system is composed of a dehydrogenase subunit I (AdhA) and a cytochrome c subunit II (AdhB).</text>
</comment>
<comment type="subcellular location">
    <subcellularLocation>
        <location evidence="6">Cell membrane</location>
        <topology evidence="6">Peripheral membrane protein</topology>
        <orientation evidence="6">Periplasmic side</orientation>
    </subcellularLocation>
</comment>
<reference key="1">
    <citation type="journal article" date="1991" name="Biochim. Biophys. Acta">
        <title>Cloning and sequencing of the gene cluster encoding two subunits of membrane-bound alcohol dehydrogenase from Acetobacter polyoxogenes.</title>
        <authorList>
            <person name="Tamaki T."/>
            <person name="Fukaya M."/>
            <person name="Takemura H."/>
            <person name="Tayama K."/>
            <person name="Okumura H."/>
            <person name="Kawamura Y."/>
            <person name="Nishiyama M."/>
            <person name="Horinouchi S."/>
            <person name="Beppu T."/>
        </authorList>
    </citation>
    <scope>NUCLEOTIDE SEQUENCE [GENOMIC DNA]</scope>
    <scope>PARTIAL PROTEIN SEQUENCE</scope>
    <scope>FUNCTION</scope>
    <scope>SUBUNIT</scope>
    <source>
        <strain>NBI1028</strain>
    </source>
</reference>
<name>ADHB_GLUPO</name>
<evidence type="ECO:0000250" key="1">
    <source>
        <dbReference type="UniProtKB" id="Q47945"/>
    </source>
</evidence>
<evidence type="ECO:0000255" key="2"/>
<evidence type="ECO:0000255" key="3">
    <source>
        <dbReference type="PROSITE-ProRule" id="PRU00433"/>
    </source>
</evidence>
<evidence type="ECO:0000269" key="4">
    <source>
    </source>
</evidence>
<evidence type="ECO:0000303" key="5">
    <source>
    </source>
</evidence>
<evidence type="ECO:0000305" key="6"/>
<evidence type="ECO:0000305" key="7">
    <source>
    </source>
</evidence>
<gene>
    <name evidence="5" type="primary">adhB</name>
</gene>